<comment type="function">
    <text evidence="1">Cell wall formation. Catalyzes the transfer of a GlcNAc subunit on undecaprenyl-pyrophosphoryl-MurNAc-pentapeptide (lipid intermediate I) to form undecaprenyl-pyrophosphoryl-MurNAc-(pentapeptide)GlcNAc (lipid intermediate II).</text>
</comment>
<comment type="catalytic activity">
    <reaction evidence="1">
        <text>di-trans,octa-cis-undecaprenyl diphospho-N-acetyl-alpha-D-muramoyl-L-alanyl-D-glutamyl-meso-2,6-diaminopimeloyl-D-alanyl-D-alanine + UDP-N-acetyl-alpha-D-glucosamine = di-trans,octa-cis-undecaprenyl diphospho-[N-acetyl-alpha-D-glucosaminyl-(1-&gt;4)]-N-acetyl-alpha-D-muramoyl-L-alanyl-D-glutamyl-meso-2,6-diaminopimeloyl-D-alanyl-D-alanine + UDP + H(+)</text>
        <dbReference type="Rhea" id="RHEA:31227"/>
        <dbReference type="ChEBI" id="CHEBI:15378"/>
        <dbReference type="ChEBI" id="CHEBI:57705"/>
        <dbReference type="ChEBI" id="CHEBI:58223"/>
        <dbReference type="ChEBI" id="CHEBI:61387"/>
        <dbReference type="ChEBI" id="CHEBI:61388"/>
        <dbReference type="EC" id="2.4.1.227"/>
    </reaction>
</comment>
<comment type="pathway">
    <text evidence="1">Cell wall biogenesis; peptidoglycan biosynthesis.</text>
</comment>
<comment type="subcellular location">
    <subcellularLocation>
        <location evidence="1">Cell membrane</location>
        <topology evidence="1">Peripheral membrane protein</topology>
        <orientation evidence="1">Cytoplasmic side</orientation>
    </subcellularLocation>
</comment>
<comment type="similarity">
    <text evidence="1">Belongs to the glycosyltransferase 28 family. MurG subfamily.</text>
</comment>
<sequence length="359" mass="37505">MNTPRVVVAGGGTAGHIEPALAVAESLRHRGAEVVALGTTKGLETSIVPERGFELRLINPVPVPRKINADLFKLPFRLLATISQTRKILKEFDTDVVIGFGGYVAAPAYIAAKLQKIPFIVHEANARSGMANKLGVRLGGMGLNAVANSGMPGTVVGIPIRSSLSGDNTALDRAQQLWGLDPEKKTILITGGSQGARSINAAVAEGIDAVLADPDVQVLHAYGRKNSAPEAQERYVPVAYIDDMAAAYAIADLVIGRSGAMTVAENTAAGIPAIYVPLPHGNGEQGLNAQPLVEEGAAVLVADSEFNGEAFSSLAAKILGDQETYNTMVIAAKESGTANAAETIADIIYSIVKNHDRNK</sequence>
<gene>
    <name evidence="1" type="primary">murG</name>
    <name type="ordered locus">DIP1598</name>
</gene>
<proteinExistence type="inferred from homology"/>
<accession>Q6NGC8</accession>
<reference key="1">
    <citation type="journal article" date="2003" name="Nucleic Acids Res.">
        <title>The complete genome sequence and analysis of Corynebacterium diphtheriae NCTC13129.</title>
        <authorList>
            <person name="Cerdeno-Tarraga A.-M."/>
            <person name="Efstratiou A."/>
            <person name="Dover L.G."/>
            <person name="Holden M.T.G."/>
            <person name="Pallen M.J."/>
            <person name="Bentley S.D."/>
            <person name="Besra G.S."/>
            <person name="Churcher C.M."/>
            <person name="James K.D."/>
            <person name="De Zoysa A."/>
            <person name="Chillingworth T."/>
            <person name="Cronin A."/>
            <person name="Dowd L."/>
            <person name="Feltwell T."/>
            <person name="Hamlin N."/>
            <person name="Holroyd S."/>
            <person name="Jagels K."/>
            <person name="Moule S."/>
            <person name="Quail M.A."/>
            <person name="Rabbinowitsch E."/>
            <person name="Rutherford K.M."/>
            <person name="Thomson N.R."/>
            <person name="Unwin L."/>
            <person name="Whitehead S."/>
            <person name="Barrell B.G."/>
            <person name="Parkhill J."/>
        </authorList>
    </citation>
    <scope>NUCLEOTIDE SEQUENCE [LARGE SCALE GENOMIC DNA]</scope>
    <source>
        <strain>ATCC 700971 / NCTC 13129 / Biotype gravis</strain>
    </source>
</reference>
<organism>
    <name type="scientific">Corynebacterium diphtheriae (strain ATCC 700971 / NCTC 13129 / Biotype gravis)</name>
    <dbReference type="NCBI Taxonomy" id="257309"/>
    <lineage>
        <taxon>Bacteria</taxon>
        <taxon>Bacillati</taxon>
        <taxon>Actinomycetota</taxon>
        <taxon>Actinomycetes</taxon>
        <taxon>Mycobacteriales</taxon>
        <taxon>Corynebacteriaceae</taxon>
        <taxon>Corynebacterium</taxon>
    </lineage>
</organism>
<evidence type="ECO:0000255" key="1">
    <source>
        <dbReference type="HAMAP-Rule" id="MF_00033"/>
    </source>
</evidence>
<name>MURG_CORDI</name>
<dbReference type="EC" id="2.4.1.227" evidence="1"/>
<dbReference type="EMBL" id="BX248358">
    <property type="protein sequence ID" value="CAE50123.1"/>
    <property type="molecule type" value="Genomic_DNA"/>
</dbReference>
<dbReference type="RefSeq" id="WP_003852153.1">
    <property type="nucleotide sequence ID" value="NC_002935.2"/>
</dbReference>
<dbReference type="SMR" id="Q6NGC8"/>
<dbReference type="STRING" id="257309.DIP1598"/>
<dbReference type="CAZy" id="GT28">
    <property type="family name" value="Glycosyltransferase Family 28"/>
</dbReference>
<dbReference type="KEGG" id="cdi:DIP1598"/>
<dbReference type="HOGENOM" id="CLU_037404_1_0_11"/>
<dbReference type="UniPathway" id="UPA00219"/>
<dbReference type="Proteomes" id="UP000002198">
    <property type="component" value="Chromosome"/>
</dbReference>
<dbReference type="GO" id="GO:0005886">
    <property type="term" value="C:plasma membrane"/>
    <property type="evidence" value="ECO:0007669"/>
    <property type="project" value="UniProtKB-SubCell"/>
</dbReference>
<dbReference type="GO" id="GO:0051991">
    <property type="term" value="F:UDP-N-acetyl-D-glucosamine:N-acetylmuramoyl-L-alanyl-D-glutamyl-meso-2,6-diaminopimelyl-D-alanyl-D-alanine-diphosphoundecaprenol 4-beta-N-acetylglucosaminlytransferase activity"/>
    <property type="evidence" value="ECO:0007669"/>
    <property type="project" value="RHEA"/>
</dbReference>
<dbReference type="GO" id="GO:0050511">
    <property type="term" value="F:undecaprenyldiphospho-muramoylpentapeptide beta-N-acetylglucosaminyltransferase activity"/>
    <property type="evidence" value="ECO:0007669"/>
    <property type="project" value="UniProtKB-UniRule"/>
</dbReference>
<dbReference type="GO" id="GO:0005975">
    <property type="term" value="P:carbohydrate metabolic process"/>
    <property type="evidence" value="ECO:0007669"/>
    <property type="project" value="InterPro"/>
</dbReference>
<dbReference type="GO" id="GO:0051301">
    <property type="term" value="P:cell division"/>
    <property type="evidence" value="ECO:0007669"/>
    <property type="project" value="UniProtKB-KW"/>
</dbReference>
<dbReference type="GO" id="GO:0071555">
    <property type="term" value="P:cell wall organization"/>
    <property type="evidence" value="ECO:0007669"/>
    <property type="project" value="UniProtKB-KW"/>
</dbReference>
<dbReference type="GO" id="GO:0030259">
    <property type="term" value="P:lipid glycosylation"/>
    <property type="evidence" value="ECO:0007669"/>
    <property type="project" value="UniProtKB-UniRule"/>
</dbReference>
<dbReference type="GO" id="GO:0009252">
    <property type="term" value="P:peptidoglycan biosynthetic process"/>
    <property type="evidence" value="ECO:0007669"/>
    <property type="project" value="UniProtKB-UniRule"/>
</dbReference>
<dbReference type="GO" id="GO:0008360">
    <property type="term" value="P:regulation of cell shape"/>
    <property type="evidence" value="ECO:0007669"/>
    <property type="project" value="UniProtKB-KW"/>
</dbReference>
<dbReference type="CDD" id="cd03785">
    <property type="entry name" value="GT28_MurG"/>
    <property type="match status" value="1"/>
</dbReference>
<dbReference type="Gene3D" id="3.40.50.2000">
    <property type="entry name" value="Glycogen Phosphorylase B"/>
    <property type="match status" value="2"/>
</dbReference>
<dbReference type="HAMAP" id="MF_00033">
    <property type="entry name" value="MurG"/>
    <property type="match status" value="1"/>
</dbReference>
<dbReference type="InterPro" id="IPR006009">
    <property type="entry name" value="GlcNAc_MurG"/>
</dbReference>
<dbReference type="InterPro" id="IPR007235">
    <property type="entry name" value="Glyco_trans_28_C"/>
</dbReference>
<dbReference type="InterPro" id="IPR004276">
    <property type="entry name" value="GlycoTrans_28_N"/>
</dbReference>
<dbReference type="NCBIfam" id="TIGR01133">
    <property type="entry name" value="murG"/>
    <property type="match status" value="1"/>
</dbReference>
<dbReference type="PANTHER" id="PTHR21015:SF22">
    <property type="entry name" value="GLYCOSYLTRANSFERASE"/>
    <property type="match status" value="1"/>
</dbReference>
<dbReference type="PANTHER" id="PTHR21015">
    <property type="entry name" value="UDP-N-ACETYLGLUCOSAMINE--N-ACETYLMURAMYL-(PENTAPEPTIDE) PYROPHOSPHORYL-UNDECAPRENOL N-ACETYLGLUCOSAMINE TRANSFERASE 1"/>
    <property type="match status" value="1"/>
</dbReference>
<dbReference type="Pfam" id="PF04101">
    <property type="entry name" value="Glyco_tran_28_C"/>
    <property type="match status" value="1"/>
</dbReference>
<dbReference type="Pfam" id="PF03033">
    <property type="entry name" value="Glyco_transf_28"/>
    <property type="match status" value="1"/>
</dbReference>
<dbReference type="SUPFAM" id="SSF53756">
    <property type="entry name" value="UDP-Glycosyltransferase/glycogen phosphorylase"/>
    <property type="match status" value="1"/>
</dbReference>
<feature type="chain" id="PRO_0000225047" description="UDP-N-acetylglucosamine--N-acetylmuramyl-(pentapeptide) pyrophosphoryl-undecaprenol N-acetylglucosamine transferase">
    <location>
        <begin position="1"/>
        <end position="359"/>
    </location>
</feature>
<feature type="binding site" evidence="1">
    <location>
        <begin position="13"/>
        <end position="15"/>
    </location>
    <ligand>
        <name>UDP-N-acetyl-alpha-D-glucosamine</name>
        <dbReference type="ChEBI" id="CHEBI:57705"/>
    </ligand>
</feature>
<feature type="binding site" evidence="1">
    <location>
        <position position="125"/>
    </location>
    <ligand>
        <name>UDP-N-acetyl-alpha-D-glucosamine</name>
        <dbReference type="ChEBI" id="CHEBI:57705"/>
    </ligand>
</feature>
<feature type="binding site" evidence="1">
    <location>
        <position position="161"/>
    </location>
    <ligand>
        <name>UDP-N-acetyl-alpha-D-glucosamine</name>
        <dbReference type="ChEBI" id="CHEBI:57705"/>
    </ligand>
</feature>
<feature type="binding site" evidence="1">
    <location>
        <position position="193"/>
    </location>
    <ligand>
        <name>UDP-N-acetyl-alpha-D-glucosamine</name>
        <dbReference type="ChEBI" id="CHEBI:57705"/>
    </ligand>
</feature>
<feature type="binding site" evidence="1">
    <location>
        <position position="241"/>
    </location>
    <ligand>
        <name>UDP-N-acetyl-alpha-D-glucosamine</name>
        <dbReference type="ChEBI" id="CHEBI:57705"/>
    </ligand>
</feature>
<feature type="binding site" evidence="1">
    <location>
        <position position="285"/>
    </location>
    <ligand>
        <name>UDP-N-acetyl-alpha-D-glucosamine</name>
        <dbReference type="ChEBI" id="CHEBI:57705"/>
    </ligand>
</feature>
<protein>
    <recommendedName>
        <fullName evidence="1">UDP-N-acetylglucosamine--N-acetylmuramyl-(pentapeptide) pyrophosphoryl-undecaprenol N-acetylglucosamine transferase</fullName>
        <ecNumber evidence="1">2.4.1.227</ecNumber>
    </recommendedName>
    <alternativeName>
        <fullName evidence="1">Undecaprenyl-PP-MurNAc-pentapeptide-UDPGlcNAc GlcNAc transferase</fullName>
    </alternativeName>
</protein>
<keyword id="KW-0131">Cell cycle</keyword>
<keyword id="KW-0132">Cell division</keyword>
<keyword id="KW-1003">Cell membrane</keyword>
<keyword id="KW-0133">Cell shape</keyword>
<keyword id="KW-0961">Cell wall biogenesis/degradation</keyword>
<keyword id="KW-0328">Glycosyltransferase</keyword>
<keyword id="KW-0472">Membrane</keyword>
<keyword id="KW-0573">Peptidoglycan synthesis</keyword>
<keyword id="KW-1185">Reference proteome</keyword>
<keyword id="KW-0808">Transferase</keyword>